<sequence length="76" mass="9028">MDADKVKEEPQSVWEKAKPMFTNKPASGYYDPCQDFADRSIKCMRRNGNDKTMCSDYFQAYRDCKKEWTTQRKNKS</sequence>
<proteinExistence type="inferred from homology"/>
<evidence type="ECO:0000250" key="1"/>
<evidence type="ECO:0000255" key="2"/>
<evidence type="ECO:0000255" key="3">
    <source>
        <dbReference type="PROSITE-ProRule" id="PRU01150"/>
    </source>
</evidence>
<reference key="1">
    <citation type="submission" date="2006-02" db="EMBL/GenBank/DDBJ databases">
        <title>Putative cytochrome c oxidase assembly factor PbCOX23.</title>
        <authorList>
            <person name="Bandeira S.C.B."/>
            <person name="Nobrega M.P."/>
        </authorList>
    </citation>
    <scope>NUCLEOTIDE SEQUENCE [MRNA]</scope>
</reference>
<accession>Q208S3</accession>
<name>COX23_PARBR</name>
<dbReference type="EMBL" id="DQ402182">
    <property type="protein sequence ID" value="ABD64679.1"/>
    <property type="molecule type" value="mRNA"/>
</dbReference>
<dbReference type="SMR" id="Q208S3"/>
<dbReference type="VEuPathDB" id="FungiDB:PABG_11353"/>
<dbReference type="VEuPathDB" id="FungiDB:PADG_04072"/>
<dbReference type="GO" id="GO:0005758">
    <property type="term" value="C:mitochondrial intermembrane space"/>
    <property type="evidence" value="ECO:0007669"/>
    <property type="project" value="UniProtKB-SubCell"/>
</dbReference>
<dbReference type="GO" id="GO:0033108">
    <property type="term" value="P:mitochondrial respiratory chain complex assembly"/>
    <property type="evidence" value="ECO:0007669"/>
    <property type="project" value="TreeGrafter"/>
</dbReference>
<dbReference type="Gene3D" id="1.10.287.1130">
    <property type="entry name" value="CytochromE C oxidase copper chaperone"/>
    <property type="match status" value="1"/>
</dbReference>
<dbReference type="InterPro" id="IPR051040">
    <property type="entry name" value="COX23"/>
</dbReference>
<dbReference type="InterPro" id="IPR009069">
    <property type="entry name" value="Cys_alpha_HP_mot_SF"/>
</dbReference>
<dbReference type="PANTHER" id="PTHR46811">
    <property type="entry name" value="COILED-COIL-HELIX-COILED-COIL-HELIX DOMAIN-CONTAINING PROTEIN 7"/>
    <property type="match status" value="1"/>
</dbReference>
<dbReference type="PANTHER" id="PTHR46811:SF1">
    <property type="entry name" value="COILED-COIL-HELIX-COILED-COIL-HELIX DOMAIN-CONTAINING PROTEIN 7"/>
    <property type="match status" value="1"/>
</dbReference>
<dbReference type="SUPFAM" id="SSF47072">
    <property type="entry name" value="Cysteine alpha-hairpin motif"/>
    <property type="match status" value="1"/>
</dbReference>
<dbReference type="PROSITE" id="PS51808">
    <property type="entry name" value="CHCH"/>
    <property type="match status" value="1"/>
</dbReference>
<keyword id="KW-1015">Disulfide bond</keyword>
<keyword id="KW-0496">Mitochondrion</keyword>
<keyword id="KW-0809">Transit peptide</keyword>
<organism>
    <name type="scientific">Paracoccidioides brasiliensis</name>
    <dbReference type="NCBI Taxonomy" id="121759"/>
    <lineage>
        <taxon>Eukaryota</taxon>
        <taxon>Fungi</taxon>
        <taxon>Dikarya</taxon>
        <taxon>Ascomycota</taxon>
        <taxon>Pezizomycotina</taxon>
        <taxon>Eurotiomycetes</taxon>
        <taxon>Eurotiomycetidae</taxon>
        <taxon>Onygenales</taxon>
        <taxon>Ajellomycetaceae</taxon>
        <taxon>Paracoccidioides</taxon>
    </lineage>
</organism>
<feature type="transit peptide" description="Mitochondrion" evidence="2">
    <location>
        <begin position="1"/>
        <end status="unknown"/>
    </location>
</feature>
<feature type="chain" id="PRO_0000280666" description="Cytochrome c oxidase-assembly factor COX23, mitochondrial">
    <location>
        <begin status="unknown"/>
        <end position="76"/>
    </location>
</feature>
<feature type="domain" description="CHCH" evidence="3">
    <location>
        <begin position="30"/>
        <end position="72"/>
    </location>
</feature>
<feature type="short sequence motif" description="Cx9C motif 1" evidence="3">
    <location>
        <begin position="33"/>
        <end position="43"/>
    </location>
</feature>
<feature type="short sequence motif" description="Cx9C motif 2" evidence="3">
    <location>
        <begin position="54"/>
        <end position="64"/>
    </location>
</feature>
<feature type="disulfide bond" evidence="3">
    <location>
        <begin position="33"/>
        <end position="64"/>
    </location>
</feature>
<feature type="disulfide bond" evidence="3">
    <location>
        <begin position="43"/>
        <end position="54"/>
    </location>
</feature>
<protein>
    <recommendedName>
        <fullName>Cytochrome c oxidase-assembly factor COX23, mitochondrial</fullName>
    </recommendedName>
</protein>
<gene>
    <name type="primary">COX23</name>
</gene>
<comment type="function">
    <text evidence="1">Required for the assembly of cytochrome c oxidase.</text>
</comment>
<comment type="subcellular location">
    <subcellularLocation>
        <location evidence="1">Mitochondrion intermembrane space</location>
    </subcellularLocation>
</comment>